<accession>P0DXI3</accession>
<protein>
    <recommendedName>
        <fullName evidence="4">Dihydroniloticin synthase CYP71CD4</fullName>
        <ecNumber evidence="3">1.14.14.-</ecNumber>
    </recommendedName>
    <alternativeName>
        <fullName evidence="4">Cytochrome P450 family 71 subfamily CD polypeptide 4</fullName>
        <shortName evidence="4">AaCYP71CD4</shortName>
    </alternativeName>
</protein>
<gene>
    <name evidence="4" type="primary">CYP71CD4</name>
</gene>
<comment type="function">
    <text evidence="3">Monooxygenase involved in the biosynthesis of quassinoids triterpene natural products such as ailanthone, chaparrinone, glaucarubinone and amarolide, allelopathic degraded triterpene lactones inhibiting the growth of other plants, and possessing antimalarial, antifeedant, insecticidal, anti-inflammatory and anticancer activities (PubMed:36082289). Catalyzes the conversion of tirucalladienol to dihydroniloticin (PubMed:36082289).</text>
</comment>
<comment type="catalytic activity">
    <reaction evidence="3">
        <text>tirucalla-7,24-dien-3beta-ol + 2 reduced [NADPH--hemoprotein reductase] + 2 O2 = dihydroniloticin + 2 oxidized [NADPH--hemoprotein reductase] + 2 H2O + 2 H(+)</text>
        <dbReference type="Rhea" id="RHEA:80279"/>
        <dbReference type="Rhea" id="RHEA-COMP:11964"/>
        <dbReference type="Rhea" id="RHEA-COMP:11965"/>
        <dbReference type="ChEBI" id="CHEBI:15377"/>
        <dbReference type="ChEBI" id="CHEBI:15378"/>
        <dbReference type="ChEBI" id="CHEBI:15379"/>
        <dbReference type="ChEBI" id="CHEBI:57618"/>
        <dbReference type="ChEBI" id="CHEBI:58210"/>
        <dbReference type="ChEBI" id="CHEBI:63468"/>
        <dbReference type="ChEBI" id="CHEBI:231450"/>
    </reaction>
    <physiologicalReaction direction="left-to-right" evidence="3">
        <dbReference type="Rhea" id="RHEA:80280"/>
    </physiologicalReaction>
</comment>
<comment type="cofactor">
    <cofactor evidence="1">
        <name>heme</name>
        <dbReference type="ChEBI" id="CHEBI:30413"/>
    </cofactor>
</comment>
<comment type="pathway">
    <text evidence="3">Secondary metabolite biosynthesis; terpenoid biosynthesis.</text>
</comment>
<comment type="subcellular location">
    <subcellularLocation>
        <location evidence="2">Membrane</location>
        <topology evidence="2">Single-pass membrane protein</topology>
    </subcellularLocation>
</comment>
<comment type="tissue specificity">
    <text evidence="3">Mainly expressed in roots and, to a lesser extent, in stems.</text>
</comment>
<comment type="similarity">
    <text evidence="5">Belongs to the cytochrome P450 family.</text>
</comment>
<sequence length="508" mass="57765">MMELQLDFFSVTSFIIFFLFLFRLVWDWKNSTDEKLPPGPSKLPIIGSLHHLFGRNVDLPYYALTDLAKIYGPLMHLQLGKMSLVVASSAKMFKELMKENDLAISQRPVPYVARVLEDAGRDIAFVPYGDYWRQIRKISRMELFSVRKVQALHYIREDQSSKLIESIRASAGSVINLSKEVSHYTSTVVARAAFGSGCKDQDKFIRLSLEMVAAAGAVSTLPDMFPLLGFISVISGKKAFLKNIQKEADKILDVIIDEHIQRMKSKGYEEGESDKEDIVDVLLRLERTGELEISITPQDIKAVIWSVFAGGTDTSSTTTLWVMSELMRNPKVMEKVQAEVREMLKGKTEIYESDIQDLTYMRAVMKEALRLRIPGPLLLPREAMEPLEVDGYVIPAKTKILFNAWAVTRDPEIWKDPESFIPDRFIENPIDYKGTNYEFTPFGSGRRICPGMNFGIANVELPLAKLLYFFDWKLPYGMKPDDLDMTAKFGVVCGRKNDLHLIPTPYDP</sequence>
<evidence type="ECO:0000250" key="1">
    <source>
        <dbReference type="UniProtKB" id="Q96242"/>
    </source>
</evidence>
<evidence type="ECO:0000255" key="2"/>
<evidence type="ECO:0000269" key="3">
    <source>
    </source>
</evidence>
<evidence type="ECO:0000303" key="4">
    <source>
    </source>
</evidence>
<evidence type="ECO:0000305" key="5"/>
<reference key="1">
    <citation type="journal article" date="2022" name="Front. Plant Sci.">
        <title>Identification of early quassinoid biosynthesis in the invasive tree of heaven (Ailanthus altissima) confirms evolutionary origin from protolimonoids.</title>
        <authorList>
            <person name="Chuang L."/>
            <person name="Liu S."/>
            <person name="Biedermann D."/>
            <person name="Franke J."/>
        </authorList>
    </citation>
    <scope>NUCLEOTIDE SEQUENCE [MRNA]</scope>
    <scope>FUNCTION</scope>
    <scope>CATALYTIC ACTIVITY</scope>
    <scope>PATHWAY</scope>
    <scope>TISSUE SPECIFICITY</scope>
</reference>
<keyword id="KW-0349">Heme</keyword>
<keyword id="KW-0408">Iron</keyword>
<keyword id="KW-0472">Membrane</keyword>
<keyword id="KW-0479">Metal-binding</keyword>
<keyword id="KW-0503">Monooxygenase</keyword>
<keyword id="KW-0560">Oxidoreductase</keyword>
<keyword id="KW-0812">Transmembrane</keyword>
<keyword id="KW-1133">Transmembrane helix</keyword>
<feature type="chain" id="PRO_0000461362" description="Dihydroniloticin synthase CYP71CD4">
    <location>
        <begin position="1"/>
        <end position="508"/>
    </location>
</feature>
<feature type="transmembrane region" description="Helical" evidence="2">
    <location>
        <begin position="6"/>
        <end position="26"/>
    </location>
</feature>
<feature type="binding site" description="axial binding residue" evidence="1">
    <location>
        <position position="449"/>
    </location>
    <ligand>
        <name>heme</name>
        <dbReference type="ChEBI" id="CHEBI:30413"/>
    </ligand>
    <ligandPart>
        <name>Fe</name>
        <dbReference type="ChEBI" id="CHEBI:18248"/>
    </ligandPart>
</feature>
<name>C1CD4_AILAL</name>
<organism>
    <name type="scientific">Ailanthus altissima</name>
    <name type="common">Tree-of-heaven</name>
    <name type="synonym">Toxicodendron altissimum</name>
    <dbReference type="NCBI Taxonomy" id="2768810"/>
    <lineage>
        <taxon>Eukaryota</taxon>
        <taxon>Viridiplantae</taxon>
        <taxon>Streptophyta</taxon>
        <taxon>Embryophyta</taxon>
        <taxon>Tracheophyta</taxon>
        <taxon>Spermatophyta</taxon>
        <taxon>Magnoliopsida</taxon>
        <taxon>eudicotyledons</taxon>
        <taxon>Gunneridae</taxon>
        <taxon>Pentapetalae</taxon>
        <taxon>rosids</taxon>
        <taxon>malvids</taxon>
        <taxon>Sapindales</taxon>
        <taxon>Simaroubaceae</taxon>
        <taxon>Ailanthus</taxon>
    </lineage>
</organism>
<proteinExistence type="evidence at protein level"/>
<dbReference type="EC" id="1.14.14.-" evidence="3"/>
<dbReference type="EMBL" id="ON595698">
    <property type="protein sequence ID" value="UTU07508.1"/>
    <property type="molecule type" value="mRNA"/>
</dbReference>
<dbReference type="SMR" id="P0DXI3"/>
<dbReference type="UniPathway" id="UPA00213"/>
<dbReference type="GO" id="GO:0016020">
    <property type="term" value="C:membrane"/>
    <property type="evidence" value="ECO:0007669"/>
    <property type="project" value="UniProtKB-SubCell"/>
</dbReference>
<dbReference type="GO" id="GO:0020037">
    <property type="term" value="F:heme binding"/>
    <property type="evidence" value="ECO:0007669"/>
    <property type="project" value="InterPro"/>
</dbReference>
<dbReference type="GO" id="GO:0005506">
    <property type="term" value="F:iron ion binding"/>
    <property type="evidence" value="ECO:0007669"/>
    <property type="project" value="InterPro"/>
</dbReference>
<dbReference type="GO" id="GO:0004497">
    <property type="term" value="F:monooxygenase activity"/>
    <property type="evidence" value="ECO:0007669"/>
    <property type="project" value="UniProtKB-KW"/>
</dbReference>
<dbReference type="GO" id="GO:0016705">
    <property type="term" value="F:oxidoreductase activity, acting on paired donors, with incorporation or reduction of molecular oxygen"/>
    <property type="evidence" value="ECO:0007669"/>
    <property type="project" value="InterPro"/>
</dbReference>
<dbReference type="CDD" id="cd11072">
    <property type="entry name" value="CYP71-like"/>
    <property type="match status" value="1"/>
</dbReference>
<dbReference type="FunFam" id="1.10.630.10:FF:000043">
    <property type="entry name" value="Cytochrome P450 99A2"/>
    <property type="match status" value="1"/>
</dbReference>
<dbReference type="Gene3D" id="1.10.630.10">
    <property type="entry name" value="Cytochrome P450"/>
    <property type="match status" value="1"/>
</dbReference>
<dbReference type="InterPro" id="IPR001128">
    <property type="entry name" value="Cyt_P450"/>
</dbReference>
<dbReference type="InterPro" id="IPR017972">
    <property type="entry name" value="Cyt_P450_CS"/>
</dbReference>
<dbReference type="InterPro" id="IPR002401">
    <property type="entry name" value="Cyt_P450_E_grp-I"/>
</dbReference>
<dbReference type="InterPro" id="IPR036396">
    <property type="entry name" value="Cyt_P450_sf"/>
</dbReference>
<dbReference type="PANTHER" id="PTHR47955">
    <property type="entry name" value="CYTOCHROME P450 FAMILY 71 PROTEIN"/>
    <property type="match status" value="1"/>
</dbReference>
<dbReference type="PANTHER" id="PTHR47955:SF9">
    <property type="entry name" value="PREMNASPIRODIENE OXYGENASE-LIKE"/>
    <property type="match status" value="1"/>
</dbReference>
<dbReference type="Pfam" id="PF00067">
    <property type="entry name" value="p450"/>
    <property type="match status" value="1"/>
</dbReference>
<dbReference type="PRINTS" id="PR00463">
    <property type="entry name" value="EP450I"/>
</dbReference>
<dbReference type="PRINTS" id="PR00385">
    <property type="entry name" value="P450"/>
</dbReference>
<dbReference type="SUPFAM" id="SSF48264">
    <property type="entry name" value="Cytochrome P450"/>
    <property type="match status" value="1"/>
</dbReference>
<dbReference type="PROSITE" id="PS00086">
    <property type="entry name" value="CYTOCHROME_P450"/>
    <property type="match status" value="1"/>
</dbReference>